<sequence>MAVQQNRKSRSRRDMRRSHDALTENALTVDQATGETHRRHHVTKDGFYRGRQLFAKAADAE</sequence>
<protein>
    <recommendedName>
        <fullName evidence="1">Large ribosomal subunit protein bL32</fullName>
    </recommendedName>
    <alternativeName>
        <fullName evidence="3">50S ribosomal protein L32</fullName>
    </alternativeName>
</protein>
<feature type="chain" id="PRO_1000120075" description="Large ribosomal subunit protein bL32">
    <location>
        <begin position="1"/>
        <end position="61"/>
    </location>
</feature>
<feature type="region of interest" description="Disordered" evidence="2">
    <location>
        <begin position="1"/>
        <end position="44"/>
    </location>
</feature>
<feature type="compositionally biased region" description="Basic residues" evidence="2">
    <location>
        <begin position="7"/>
        <end position="16"/>
    </location>
</feature>
<feature type="compositionally biased region" description="Polar residues" evidence="2">
    <location>
        <begin position="25"/>
        <end position="34"/>
    </location>
</feature>
<reference key="1">
    <citation type="journal article" date="2008" name="PLoS ONE">
        <title>Comparative analysis of Acinetobacters: three genomes for three lifestyles.</title>
        <authorList>
            <person name="Vallenet D."/>
            <person name="Nordmann P."/>
            <person name="Barbe V."/>
            <person name="Poirel L."/>
            <person name="Mangenot S."/>
            <person name="Bataille E."/>
            <person name="Dossat C."/>
            <person name="Gas S."/>
            <person name="Kreimeyer A."/>
            <person name="Lenoble P."/>
            <person name="Oztas S."/>
            <person name="Poulain J."/>
            <person name="Segurens B."/>
            <person name="Robert C."/>
            <person name="Abergel C."/>
            <person name="Claverie J.-M."/>
            <person name="Raoult D."/>
            <person name="Medigue C."/>
            <person name="Weissenbach J."/>
            <person name="Cruveiller S."/>
        </authorList>
    </citation>
    <scope>NUCLEOTIDE SEQUENCE [LARGE SCALE GENOMIC DNA]</scope>
    <source>
        <strain>AYE</strain>
    </source>
</reference>
<keyword id="KW-0687">Ribonucleoprotein</keyword>
<keyword id="KW-0689">Ribosomal protein</keyword>
<dbReference type="EMBL" id="CU459141">
    <property type="protein sequence ID" value="CAM87814.1"/>
    <property type="molecule type" value="Genomic_DNA"/>
</dbReference>
<dbReference type="RefSeq" id="WP_000290730.1">
    <property type="nucleotide sequence ID" value="NZ_JBDGFB010000027.1"/>
</dbReference>
<dbReference type="SMR" id="B0V8F1"/>
<dbReference type="EnsemblBacteria" id="CAM87814">
    <property type="protein sequence ID" value="CAM87814"/>
    <property type="gene ID" value="ABAYE2994"/>
</dbReference>
<dbReference type="GeneID" id="9383546"/>
<dbReference type="KEGG" id="aby:ABAYE2994"/>
<dbReference type="HOGENOM" id="CLU_129084_2_1_6"/>
<dbReference type="GO" id="GO:0015934">
    <property type="term" value="C:large ribosomal subunit"/>
    <property type="evidence" value="ECO:0007669"/>
    <property type="project" value="InterPro"/>
</dbReference>
<dbReference type="GO" id="GO:0003735">
    <property type="term" value="F:structural constituent of ribosome"/>
    <property type="evidence" value="ECO:0007669"/>
    <property type="project" value="InterPro"/>
</dbReference>
<dbReference type="GO" id="GO:0006412">
    <property type="term" value="P:translation"/>
    <property type="evidence" value="ECO:0007669"/>
    <property type="project" value="UniProtKB-UniRule"/>
</dbReference>
<dbReference type="HAMAP" id="MF_00340">
    <property type="entry name" value="Ribosomal_bL32"/>
    <property type="match status" value="1"/>
</dbReference>
<dbReference type="InterPro" id="IPR002677">
    <property type="entry name" value="Ribosomal_bL32"/>
</dbReference>
<dbReference type="InterPro" id="IPR044957">
    <property type="entry name" value="Ribosomal_bL32_bact"/>
</dbReference>
<dbReference type="InterPro" id="IPR011332">
    <property type="entry name" value="Ribosomal_zn-bd"/>
</dbReference>
<dbReference type="NCBIfam" id="TIGR01031">
    <property type="entry name" value="rpmF_bact"/>
    <property type="match status" value="1"/>
</dbReference>
<dbReference type="PANTHER" id="PTHR35534">
    <property type="entry name" value="50S RIBOSOMAL PROTEIN L32"/>
    <property type="match status" value="1"/>
</dbReference>
<dbReference type="PANTHER" id="PTHR35534:SF1">
    <property type="entry name" value="LARGE RIBOSOMAL SUBUNIT PROTEIN BL32"/>
    <property type="match status" value="1"/>
</dbReference>
<dbReference type="Pfam" id="PF01783">
    <property type="entry name" value="Ribosomal_L32p"/>
    <property type="match status" value="1"/>
</dbReference>
<dbReference type="SUPFAM" id="SSF57829">
    <property type="entry name" value="Zn-binding ribosomal proteins"/>
    <property type="match status" value="1"/>
</dbReference>
<comment type="similarity">
    <text evidence="1">Belongs to the bacterial ribosomal protein bL32 family.</text>
</comment>
<gene>
    <name evidence="1" type="primary">rpmF</name>
    <name type="ordered locus">ABAYE2994</name>
</gene>
<accession>B0V8F1</accession>
<name>RL32_ACIBY</name>
<proteinExistence type="inferred from homology"/>
<evidence type="ECO:0000255" key="1">
    <source>
        <dbReference type="HAMAP-Rule" id="MF_00340"/>
    </source>
</evidence>
<evidence type="ECO:0000256" key="2">
    <source>
        <dbReference type="SAM" id="MobiDB-lite"/>
    </source>
</evidence>
<evidence type="ECO:0000305" key="3"/>
<organism>
    <name type="scientific">Acinetobacter baumannii (strain AYE)</name>
    <dbReference type="NCBI Taxonomy" id="509173"/>
    <lineage>
        <taxon>Bacteria</taxon>
        <taxon>Pseudomonadati</taxon>
        <taxon>Pseudomonadota</taxon>
        <taxon>Gammaproteobacteria</taxon>
        <taxon>Moraxellales</taxon>
        <taxon>Moraxellaceae</taxon>
        <taxon>Acinetobacter</taxon>
        <taxon>Acinetobacter calcoaceticus/baumannii complex</taxon>
    </lineage>
</organism>